<keyword id="KW-0067">ATP-binding</keyword>
<keyword id="KW-0418">Kinase</keyword>
<keyword id="KW-0547">Nucleotide-binding</keyword>
<keyword id="KW-0597">Phosphoprotein</keyword>
<keyword id="KW-0723">Serine/threonine-protein kinase</keyword>
<keyword id="KW-0808">Transferase</keyword>
<evidence type="ECO:0000250" key="1"/>
<evidence type="ECO:0000255" key="2">
    <source>
        <dbReference type="PROSITE-ProRule" id="PRU00159"/>
    </source>
</evidence>
<evidence type="ECO:0000255" key="3">
    <source>
        <dbReference type="PROSITE-ProRule" id="PRU10027"/>
    </source>
</evidence>
<evidence type="ECO:0000305" key="4"/>
<name>MSK2_MEDSA</name>
<proteinExistence type="evidence at transcript level"/>
<organism>
    <name type="scientific">Medicago sativa</name>
    <name type="common">Alfalfa</name>
    <dbReference type="NCBI Taxonomy" id="3879"/>
    <lineage>
        <taxon>Eukaryota</taxon>
        <taxon>Viridiplantae</taxon>
        <taxon>Streptophyta</taxon>
        <taxon>Embryophyta</taxon>
        <taxon>Tracheophyta</taxon>
        <taxon>Spermatophyta</taxon>
        <taxon>Magnoliopsida</taxon>
        <taxon>eudicotyledons</taxon>
        <taxon>Gunneridae</taxon>
        <taxon>Pentapetalae</taxon>
        <taxon>rosids</taxon>
        <taxon>fabids</taxon>
        <taxon>Fabales</taxon>
        <taxon>Fabaceae</taxon>
        <taxon>Papilionoideae</taxon>
        <taxon>50 kb inversion clade</taxon>
        <taxon>NPAAA clade</taxon>
        <taxon>Hologalegina</taxon>
        <taxon>IRL clade</taxon>
        <taxon>Trifolieae</taxon>
        <taxon>Medicago</taxon>
    </lineage>
</organism>
<feature type="chain" id="PRO_0000086401" description="Glycogen synthase kinase-3 homolog MsK-2">
    <location>
        <begin position="1"/>
        <end position="411"/>
    </location>
</feature>
<feature type="domain" description="Protein kinase" evidence="2">
    <location>
        <begin position="74"/>
        <end position="358"/>
    </location>
</feature>
<feature type="active site" description="Proton acceptor" evidence="2 3">
    <location>
        <position position="199"/>
    </location>
</feature>
<feature type="binding site" evidence="2">
    <location>
        <begin position="80"/>
        <end position="88"/>
    </location>
    <ligand>
        <name>ATP</name>
        <dbReference type="ChEBI" id="CHEBI:30616"/>
    </ligand>
</feature>
<feature type="binding site" evidence="2">
    <location>
        <position position="103"/>
    </location>
    <ligand>
        <name>ATP</name>
        <dbReference type="ChEBI" id="CHEBI:30616"/>
    </ligand>
</feature>
<feature type="modified residue" description="Phosphotyrosine" evidence="1">
    <location>
        <position position="234"/>
    </location>
</feature>
<protein>
    <recommendedName>
        <fullName>Glycogen synthase kinase-3 homolog MsK-2</fullName>
        <ecNumber>2.7.11.1</ecNumber>
    </recommendedName>
</protein>
<gene>
    <name type="primary">MSK-2</name>
</gene>
<accession>P51138</accession>
<comment type="catalytic activity">
    <reaction>
        <text>L-seryl-[protein] + ATP = O-phospho-L-seryl-[protein] + ADP + H(+)</text>
        <dbReference type="Rhea" id="RHEA:17989"/>
        <dbReference type="Rhea" id="RHEA-COMP:9863"/>
        <dbReference type="Rhea" id="RHEA-COMP:11604"/>
        <dbReference type="ChEBI" id="CHEBI:15378"/>
        <dbReference type="ChEBI" id="CHEBI:29999"/>
        <dbReference type="ChEBI" id="CHEBI:30616"/>
        <dbReference type="ChEBI" id="CHEBI:83421"/>
        <dbReference type="ChEBI" id="CHEBI:456216"/>
        <dbReference type="EC" id="2.7.11.1"/>
    </reaction>
</comment>
<comment type="catalytic activity">
    <reaction>
        <text>L-threonyl-[protein] + ATP = O-phospho-L-threonyl-[protein] + ADP + H(+)</text>
        <dbReference type="Rhea" id="RHEA:46608"/>
        <dbReference type="Rhea" id="RHEA-COMP:11060"/>
        <dbReference type="Rhea" id="RHEA-COMP:11605"/>
        <dbReference type="ChEBI" id="CHEBI:15378"/>
        <dbReference type="ChEBI" id="CHEBI:30013"/>
        <dbReference type="ChEBI" id="CHEBI:30616"/>
        <dbReference type="ChEBI" id="CHEBI:61977"/>
        <dbReference type="ChEBI" id="CHEBI:456216"/>
        <dbReference type="EC" id="2.7.11.1"/>
    </reaction>
</comment>
<comment type="tissue specificity">
    <text>Absent in leaves and petioles while a moderate expression is seen in the stems, roots, and nodes.</text>
</comment>
<comment type="similarity">
    <text evidence="4">Belongs to the protein kinase superfamily. CMGC Ser/Thr protein kinase family. GSK-3 subfamily.</text>
</comment>
<sequence>MATAGVAPASGIVDVNASSAIAVDKLPDEILGMRIKDDKEMEAHVVDGNSTEAGHVIVTTIGGKNGQPKQTISYMAERAVGQGSFGVVFQAKCLETGETVAIKKVLQDKRYKNRELQTMRLLDHPNVVTLKHCFFSTTEKDELYLNLVLEFVPETVHRVIRHYSKMNQRMPLIYVKLYSYQICRSLAYIHNCVGVSHRDIKPQNLLVNPHTHQLKLCDFGSAKVLVKGEPNISYICSRYYRAPELIFGATEYTSAIDIWSAGCVLGELLLGQPLFPGASGVDQLVEIIKVLGTPTREEIKCMNPNYTEFKFPQIKAHPWHKIFRKRMPPEAVDLVSRLLQYSPNLRSTALEALVHPFFDELRDPNTRLPNGRHLPPLFNFKANELKGVPAEMLVKLVPSHARKQCSLFASS</sequence>
<reference key="1">
    <citation type="journal article" date="1993" name="Plant J.">
        <title>The MsK family of alfalfa protein kinase genes encodes homologues of shaggy/glycogen synthase kinase-3 and shows differential expression patterns in plant organs and development.</title>
        <authorList>
            <person name="Paz A."/>
            <person name="Jonak C."/>
            <person name="Boegre L."/>
            <person name="Meskiene I."/>
            <person name="Mairinger T."/>
            <person name="Szalay A."/>
            <person name="Heberle-Bors E."/>
            <person name="Hirt H."/>
        </authorList>
    </citation>
    <scope>NUCLEOTIDE SEQUENCE [MRNA]</scope>
</reference>
<dbReference type="EC" id="2.7.11.1"/>
<dbReference type="EMBL" id="X68410">
    <property type="protein sequence ID" value="CAA48473.1"/>
    <property type="molecule type" value="mRNA"/>
</dbReference>
<dbReference type="PIR" id="S37643">
    <property type="entry name" value="S37643"/>
</dbReference>
<dbReference type="SMR" id="P51138"/>
<dbReference type="BRENDA" id="2.7.11.26">
    <property type="organism ID" value="3078"/>
</dbReference>
<dbReference type="GO" id="GO:0005737">
    <property type="term" value="C:cytoplasm"/>
    <property type="evidence" value="ECO:0007669"/>
    <property type="project" value="TreeGrafter"/>
</dbReference>
<dbReference type="GO" id="GO:0005634">
    <property type="term" value="C:nucleus"/>
    <property type="evidence" value="ECO:0007669"/>
    <property type="project" value="TreeGrafter"/>
</dbReference>
<dbReference type="GO" id="GO:0005524">
    <property type="term" value="F:ATP binding"/>
    <property type="evidence" value="ECO:0007669"/>
    <property type="project" value="UniProtKB-KW"/>
</dbReference>
<dbReference type="GO" id="GO:0106310">
    <property type="term" value="F:protein serine kinase activity"/>
    <property type="evidence" value="ECO:0007669"/>
    <property type="project" value="RHEA"/>
</dbReference>
<dbReference type="GO" id="GO:0004674">
    <property type="term" value="F:protein serine/threonine kinase activity"/>
    <property type="evidence" value="ECO:0007669"/>
    <property type="project" value="UniProtKB-KW"/>
</dbReference>
<dbReference type="GO" id="GO:0030154">
    <property type="term" value="P:cell differentiation"/>
    <property type="evidence" value="ECO:0007669"/>
    <property type="project" value="TreeGrafter"/>
</dbReference>
<dbReference type="GO" id="GO:0007165">
    <property type="term" value="P:signal transduction"/>
    <property type="evidence" value="ECO:0007669"/>
    <property type="project" value="TreeGrafter"/>
</dbReference>
<dbReference type="CDD" id="cd14137">
    <property type="entry name" value="STKc_GSK3"/>
    <property type="match status" value="1"/>
</dbReference>
<dbReference type="FunFam" id="3.30.200.20:FF:000009">
    <property type="entry name" value="Glycogen synthase kinase-3 beta"/>
    <property type="match status" value="1"/>
</dbReference>
<dbReference type="FunFam" id="1.10.510.10:FF:000082">
    <property type="entry name" value="Shaggy-related protein kinase kappa"/>
    <property type="match status" value="1"/>
</dbReference>
<dbReference type="Gene3D" id="3.30.200.20">
    <property type="entry name" value="Phosphorylase Kinase, domain 1"/>
    <property type="match status" value="1"/>
</dbReference>
<dbReference type="Gene3D" id="1.10.510.10">
    <property type="entry name" value="Transferase(Phosphotransferase) domain 1"/>
    <property type="match status" value="1"/>
</dbReference>
<dbReference type="InterPro" id="IPR050591">
    <property type="entry name" value="GSK-3"/>
</dbReference>
<dbReference type="InterPro" id="IPR011009">
    <property type="entry name" value="Kinase-like_dom_sf"/>
</dbReference>
<dbReference type="InterPro" id="IPR000719">
    <property type="entry name" value="Prot_kinase_dom"/>
</dbReference>
<dbReference type="InterPro" id="IPR017441">
    <property type="entry name" value="Protein_kinase_ATP_BS"/>
</dbReference>
<dbReference type="InterPro" id="IPR008271">
    <property type="entry name" value="Ser/Thr_kinase_AS"/>
</dbReference>
<dbReference type="InterPro" id="IPR039192">
    <property type="entry name" value="STKc_GSK3"/>
</dbReference>
<dbReference type="PANTHER" id="PTHR24057">
    <property type="entry name" value="GLYCOGEN SYNTHASE KINASE-3 ALPHA"/>
    <property type="match status" value="1"/>
</dbReference>
<dbReference type="PANTHER" id="PTHR24057:SF79">
    <property type="entry name" value="NON-SPECIFIC SERINE_THREONINE PROTEIN KINASE"/>
    <property type="match status" value="1"/>
</dbReference>
<dbReference type="Pfam" id="PF00069">
    <property type="entry name" value="Pkinase"/>
    <property type="match status" value="1"/>
</dbReference>
<dbReference type="SMART" id="SM00220">
    <property type="entry name" value="S_TKc"/>
    <property type="match status" value="1"/>
</dbReference>
<dbReference type="SUPFAM" id="SSF56112">
    <property type="entry name" value="Protein kinase-like (PK-like)"/>
    <property type="match status" value="1"/>
</dbReference>
<dbReference type="PROSITE" id="PS00107">
    <property type="entry name" value="PROTEIN_KINASE_ATP"/>
    <property type="match status" value="1"/>
</dbReference>
<dbReference type="PROSITE" id="PS50011">
    <property type="entry name" value="PROTEIN_KINASE_DOM"/>
    <property type="match status" value="1"/>
</dbReference>
<dbReference type="PROSITE" id="PS00108">
    <property type="entry name" value="PROTEIN_KINASE_ST"/>
    <property type="match status" value="1"/>
</dbReference>